<feature type="chain" id="PRO_1000190800" description="Lipoprotein signal peptidase">
    <location>
        <begin position="1"/>
        <end position="164"/>
    </location>
</feature>
<feature type="transmembrane region" description="Helical" evidence="1">
    <location>
        <begin position="12"/>
        <end position="32"/>
    </location>
</feature>
<feature type="transmembrane region" description="Helical" evidence="1">
    <location>
        <begin position="70"/>
        <end position="90"/>
    </location>
</feature>
<feature type="transmembrane region" description="Helical" evidence="1">
    <location>
        <begin position="102"/>
        <end position="122"/>
    </location>
</feature>
<feature type="transmembrane region" description="Helical" evidence="1">
    <location>
        <begin position="137"/>
        <end position="157"/>
    </location>
</feature>
<feature type="active site" evidence="1">
    <location>
        <position position="123"/>
    </location>
</feature>
<feature type="active site" evidence="1">
    <location>
        <position position="141"/>
    </location>
</feature>
<comment type="function">
    <text evidence="1">This protein specifically catalyzes the removal of signal peptides from prolipoproteins.</text>
</comment>
<comment type="catalytic activity">
    <reaction evidence="1">
        <text>Release of signal peptides from bacterial membrane prolipoproteins. Hydrolyzes -Xaa-Yaa-Zaa-|-(S,diacylglyceryl)Cys-, in which Xaa is hydrophobic (preferably Leu), and Yaa (Ala or Ser) and Zaa (Gly or Ala) have small, neutral side chains.</text>
        <dbReference type="EC" id="3.4.23.36"/>
    </reaction>
</comment>
<comment type="pathway">
    <text evidence="1">Protein modification; lipoprotein biosynthesis (signal peptide cleavage).</text>
</comment>
<comment type="subcellular location">
    <subcellularLocation>
        <location evidence="1">Cell inner membrane</location>
        <topology evidence="1">Multi-pass membrane protein</topology>
    </subcellularLocation>
</comment>
<comment type="similarity">
    <text evidence="1">Belongs to the peptidase A8 family.</text>
</comment>
<evidence type="ECO:0000255" key="1">
    <source>
        <dbReference type="HAMAP-Rule" id="MF_00161"/>
    </source>
</evidence>
<name>LSPA_ECO45</name>
<reference key="1">
    <citation type="journal article" date="2009" name="PLoS Genet.">
        <title>Organised genome dynamics in the Escherichia coli species results in highly diverse adaptive paths.</title>
        <authorList>
            <person name="Touchon M."/>
            <person name="Hoede C."/>
            <person name="Tenaillon O."/>
            <person name="Barbe V."/>
            <person name="Baeriswyl S."/>
            <person name="Bidet P."/>
            <person name="Bingen E."/>
            <person name="Bonacorsi S."/>
            <person name="Bouchier C."/>
            <person name="Bouvet O."/>
            <person name="Calteau A."/>
            <person name="Chiapello H."/>
            <person name="Clermont O."/>
            <person name="Cruveiller S."/>
            <person name="Danchin A."/>
            <person name="Diard M."/>
            <person name="Dossat C."/>
            <person name="Karoui M.E."/>
            <person name="Frapy E."/>
            <person name="Garry L."/>
            <person name="Ghigo J.M."/>
            <person name="Gilles A.M."/>
            <person name="Johnson J."/>
            <person name="Le Bouguenec C."/>
            <person name="Lescat M."/>
            <person name="Mangenot S."/>
            <person name="Martinez-Jehanne V."/>
            <person name="Matic I."/>
            <person name="Nassif X."/>
            <person name="Oztas S."/>
            <person name="Petit M.A."/>
            <person name="Pichon C."/>
            <person name="Rouy Z."/>
            <person name="Ruf C.S."/>
            <person name="Schneider D."/>
            <person name="Tourret J."/>
            <person name="Vacherie B."/>
            <person name="Vallenet D."/>
            <person name="Medigue C."/>
            <person name="Rocha E.P.C."/>
            <person name="Denamur E."/>
        </authorList>
    </citation>
    <scope>NUCLEOTIDE SEQUENCE [LARGE SCALE GENOMIC DNA]</scope>
    <source>
        <strain>S88 / ExPEC</strain>
    </source>
</reference>
<accession>B7MAE7</accession>
<protein>
    <recommendedName>
        <fullName evidence="1">Lipoprotein signal peptidase</fullName>
        <ecNumber evidence="1">3.4.23.36</ecNumber>
    </recommendedName>
    <alternativeName>
        <fullName evidence="1">Prolipoprotein signal peptidase</fullName>
    </alternativeName>
    <alternativeName>
        <fullName evidence="1">Signal peptidase II</fullName>
        <shortName evidence="1">SPase II</shortName>
    </alternativeName>
</protein>
<dbReference type="EC" id="3.4.23.36" evidence="1"/>
<dbReference type="EMBL" id="CU928161">
    <property type="protein sequence ID" value="CAR01393.1"/>
    <property type="molecule type" value="Genomic_DNA"/>
</dbReference>
<dbReference type="RefSeq" id="WP_000083369.1">
    <property type="nucleotide sequence ID" value="NC_011742.1"/>
</dbReference>
<dbReference type="SMR" id="B7MAE7"/>
<dbReference type="MEROPS" id="A08.001"/>
<dbReference type="GeneID" id="75169926"/>
<dbReference type="KEGG" id="ecz:ECS88_0026"/>
<dbReference type="HOGENOM" id="CLU_083252_4_0_6"/>
<dbReference type="UniPathway" id="UPA00665"/>
<dbReference type="Proteomes" id="UP000000747">
    <property type="component" value="Chromosome"/>
</dbReference>
<dbReference type="GO" id="GO:0005886">
    <property type="term" value="C:plasma membrane"/>
    <property type="evidence" value="ECO:0007669"/>
    <property type="project" value="UniProtKB-SubCell"/>
</dbReference>
<dbReference type="GO" id="GO:0004190">
    <property type="term" value="F:aspartic-type endopeptidase activity"/>
    <property type="evidence" value="ECO:0007669"/>
    <property type="project" value="UniProtKB-UniRule"/>
</dbReference>
<dbReference type="GO" id="GO:0006508">
    <property type="term" value="P:proteolysis"/>
    <property type="evidence" value="ECO:0007669"/>
    <property type="project" value="UniProtKB-KW"/>
</dbReference>
<dbReference type="HAMAP" id="MF_00161">
    <property type="entry name" value="LspA"/>
    <property type="match status" value="1"/>
</dbReference>
<dbReference type="InterPro" id="IPR001872">
    <property type="entry name" value="Peptidase_A8"/>
</dbReference>
<dbReference type="NCBIfam" id="TIGR00077">
    <property type="entry name" value="lspA"/>
    <property type="match status" value="1"/>
</dbReference>
<dbReference type="PANTHER" id="PTHR33695">
    <property type="entry name" value="LIPOPROTEIN SIGNAL PEPTIDASE"/>
    <property type="match status" value="1"/>
</dbReference>
<dbReference type="PANTHER" id="PTHR33695:SF1">
    <property type="entry name" value="LIPOPROTEIN SIGNAL PEPTIDASE"/>
    <property type="match status" value="1"/>
</dbReference>
<dbReference type="Pfam" id="PF01252">
    <property type="entry name" value="Peptidase_A8"/>
    <property type="match status" value="1"/>
</dbReference>
<dbReference type="PRINTS" id="PR00781">
    <property type="entry name" value="LIPOSIGPTASE"/>
</dbReference>
<dbReference type="PROSITE" id="PS00855">
    <property type="entry name" value="SPASE_II"/>
    <property type="match status" value="1"/>
</dbReference>
<keyword id="KW-0064">Aspartyl protease</keyword>
<keyword id="KW-0997">Cell inner membrane</keyword>
<keyword id="KW-1003">Cell membrane</keyword>
<keyword id="KW-0378">Hydrolase</keyword>
<keyword id="KW-0472">Membrane</keyword>
<keyword id="KW-0645">Protease</keyword>
<keyword id="KW-1185">Reference proteome</keyword>
<keyword id="KW-0812">Transmembrane</keyword>
<keyword id="KW-1133">Transmembrane helix</keyword>
<gene>
    <name evidence="1" type="primary">lspA</name>
    <name type="ordered locus">ECS88_0026</name>
</gene>
<organism>
    <name type="scientific">Escherichia coli O45:K1 (strain S88 / ExPEC)</name>
    <dbReference type="NCBI Taxonomy" id="585035"/>
    <lineage>
        <taxon>Bacteria</taxon>
        <taxon>Pseudomonadati</taxon>
        <taxon>Pseudomonadota</taxon>
        <taxon>Gammaproteobacteria</taxon>
        <taxon>Enterobacterales</taxon>
        <taxon>Enterobacteriaceae</taxon>
        <taxon>Escherichia</taxon>
    </lineage>
</organism>
<sequence>MSQSICSTGLRWLWLVVVVLIIDLGSKYLILQNFALGDTVPLFPSLNLHYARNYGAAFSFLADSGGWQRWFFAGIAIGISVILAVMMYRSKATQKLNNIAYALIIGGALGNLFDRLWHGFVVDMIDFYVGDWHFATFNLADTAICVGAALIVLEGFLPSKAKKQ</sequence>
<proteinExistence type="inferred from homology"/>